<protein>
    <recommendedName>
        <fullName evidence="9">KICSTOR complex protein SZT2</fullName>
    </recommendedName>
    <alternativeName>
        <fullName evidence="7">Seizure threshold 2 protein</fullName>
    </alternativeName>
    <alternativeName>
        <fullName evidence="8">Transcript increased in glutamate resistance</fullName>
        <shortName evidence="8">TIGR</shortName>
    </alternativeName>
</protein>
<comment type="function">
    <text evidence="1 4 5 6">As part of the KICSTOR complex functions in the amino acid-sensing branch of the TORC1 signaling pathway. Recruits, in an amino acid-independent manner, the GATOR1 complex to the lysosomal membranes and allows its interaction with GATOR2 and the RAG GTPases. Functions upstream of the RAG GTPases and is required to negatively regulate mTORC1 signaling in absence of amino acids (By similarity). In absence of the KICSTOR complex mTORC1 is constitutively localized to the lysosome and activated. The KICSTOR complex is also probably involved in the regulation of mTORC1 by glucose (PubMed:28199306, PubMed:28199315). May play a role in the cellular response to oxidative stress (PubMed:20045724).</text>
</comment>
<comment type="subunit">
    <text evidence="1">Part of the KICSTOR complex composed of KPTN, ITFG2, KICS2 and SZT2. SZT2 probably serves as a link between the other three proteins in the KICSTOR complex and may mediate the direct interaction with the GATOR complex via GATOR1. The KICSTOR complex interacts directly with the GATOR1 complex and most probably indirectly with the GATOR2 complex in an amino acid-independent manner.</text>
</comment>
<comment type="subcellular location">
    <subcellularLocation>
        <location evidence="1">Lysosome membrane</location>
    </subcellularLocation>
    <subcellularLocation>
        <location evidence="4">Peroxisome</location>
    </subcellularLocation>
    <text evidence="1">Localization to lysosomes is amino acid-independent.</text>
</comment>
<comment type="alternative products">
    <event type="alternative splicing"/>
    <isoform>
        <id>A2A9C3-1</id>
        <name>1</name>
        <sequence type="displayed"/>
    </isoform>
    <isoform>
        <id>A2A9C3-2</id>
        <name>2</name>
        <sequence type="described" ref="VSP_039917"/>
    </isoform>
</comment>
<comment type="tissue specificity">
    <text evidence="3 4">Mostly expressed in brain, spinal cord and lung.</text>
</comment>
<comment type="induction">
    <text evidence="4">Induced in cells resistant to glutamate toxicity.</text>
</comment>
<comment type="disruption phenotype">
    <text evidence="3 5 6">Knockout mice lacking Szt2 are born at an expected Mendelian ratio, but they do not survive weaning or any fasting (PubMed:28199315). They display increased mTORC1 signaling in several tissues (PubMed:28199306, PubMed:28199315). Mutant mice with a gene trap-induced truncating mutation display embryonic lethality and surviving mutants show significantly decreased threshold to minimal forebrain clonic seizures (PubMed:19624305).</text>
</comment>
<comment type="sequence caution" evidence="9">
    <conflict type="frameshift">
        <sequence resource="EMBL-CDS" id="AAH52935"/>
    </conflict>
</comment>
<comment type="sequence caution" evidence="9">
    <conflict type="miscellaneous discrepancy">
        <sequence resource="EMBL-CDS" id="AAH52935"/>
    </conflict>
    <text>Contaminating sequence. Sequence of unknown origin in the N-terminal part.</text>
</comment>
<comment type="sequence caution" evidence="9">
    <conflict type="frameshift">
        <sequence resource="EMBL" id="GU433214"/>
    </conflict>
</comment>
<dbReference type="EMBL" id="FJ998170">
    <property type="protein sequence ID" value="ACS91341.1"/>
    <property type="molecule type" value="mRNA"/>
</dbReference>
<dbReference type="EMBL" id="GU433214">
    <property type="status" value="NOT_ANNOTATED_CDS"/>
    <property type="molecule type" value="mRNA"/>
</dbReference>
<dbReference type="EMBL" id="AL627212">
    <property type="status" value="NOT_ANNOTATED_CDS"/>
    <property type="molecule type" value="Genomic_DNA"/>
</dbReference>
<dbReference type="EMBL" id="BC059842">
    <property type="protein sequence ID" value="AAH59842.2"/>
    <property type="molecule type" value="mRNA"/>
</dbReference>
<dbReference type="EMBL" id="BC052935">
    <property type="protein sequence ID" value="AAH52935.1"/>
    <property type="status" value="ALT_SEQ"/>
    <property type="molecule type" value="mRNA"/>
</dbReference>
<dbReference type="CCDS" id="CCDS51283.1">
    <molecule id="A2A9C3-1"/>
</dbReference>
<dbReference type="RefSeq" id="NP_937813.3">
    <molecule id="A2A9C3-1"/>
    <property type="nucleotide sequence ID" value="NM_198170.4"/>
</dbReference>
<dbReference type="BioGRID" id="231000">
    <property type="interactions" value="5"/>
</dbReference>
<dbReference type="FunCoup" id="A2A9C3">
    <property type="interactions" value="1357"/>
</dbReference>
<dbReference type="STRING" id="10090.ENSMUSP00000074862"/>
<dbReference type="GlyGen" id="A2A9C3">
    <property type="glycosylation" value="2 sites"/>
</dbReference>
<dbReference type="iPTMnet" id="A2A9C3"/>
<dbReference type="PhosphoSitePlus" id="A2A9C3"/>
<dbReference type="jPOST" id="A2A9C3"/>
<dbReference type="PaxDb" id="10090-ENSMUSP00000074862"/>
<dbReference type="PeptideAtlas" id="A2A9C3"/>
<dbReference type="ProteomicsDB" id="263198">
    <molecule id="A2A9C3-1"/>
</dbReference>
<dbReference type="ProteomicsDB" id="263199">
    <molecule id="A2A9C3-2"/>
</dbReference>
<dbReference type="Pumba" id="A2A9C3"/>
<dbReference type="Antibodypedia" id="32333">
    <property type="antibodies" value="77 antibodies from 14 providers"/>
</dbReference>
<dbReference type="DNASU" id="230676"/>
<dbReference type="Ensembl" id="ENSMUST00000075406.12">
    <molecule id="A2A9C3-1"/>
    <property type="protein sequence ID" value="ENSMUSP00000074862.6"/>
    <property type="gene ID" value="ENSMUSG00000033253.19"/>
</dbReference>
<dbReference type="GeneID" id="230676"/>
<dbReference type="KEGG" id="mmu:230676"/>
<dbReference type="UCSC" id="uc012djw.2">
    <molecule id="A2A9C3-1"/>
    <property type="organism name" value="mouse"/>
</dbReference>
<dbReference type="UCSC" id="uc012djx.2">
    <molecule id="A2A9C3-2"/>
    <property type="organism name" value="mouse"/>
</dbReference>
<dbReference type="AGR" id="MGI:3033336"/>
<dbReference type="CTD" id="23334"/>
<dbReference type="MGI" id="MGI:3033336">
    <property type="gene designation" value="Szt2"/>
</dbReference>
<dbReference type="VEuPathDB" id="HostDB:ENSMUSG00000033253"/>
<dbReference type="eggNOG" id="ENOG502QPW4">
    <property type="taxonomic scope" value="Eukaryota"/>
</dbReference>
<dbReference type="GeneTree" id="ENSGT00390000018402"/>
<dbReference type="HOGENOM" id="CLU_000250_0_0_1"/>
<dbReference type="InParanoid" id="A2A9C3"/>
<dbReference type="OMA" id="PLFVHIT"/>
<dbReference type="OrthoDB" id="43547at2759"/>
<dbReference type="PhylomeDB" id="A2A9C3"/>
<dbReference type="TreeFam" id="TF333377"/>
<dbReference type="Reactome" id="R-MMU-9639288">
    <property type="pathway name" value="Amino acids regulate mTORC1"/>
</dbReference>
<dbReference type="BioGRID-ORCS" id="230676">
    <property type="hits" value="3 hits in 77 CRISPR screens"/>
</dbReference>
<dbReference type="PRO" id="PR:A2A9C3"/>
<dbReference type="Proteomes" id="UP000000589">
    <property type="component" value="Chromosome 4"/>
</dbReference>
<dbReference type="RNAct" id="A2A9C3">
    <property type="molecule type" value="protein"/>
</dbReference>
<dbReference type="Bgee" id="ENSMUSG00000033253">
    <property type="expression patterns" value="Expressed in rostral migratory stream and 226 other cell types or tissues"/>
</dbReference>
<dbReference type="ExpressionAtlas" id="A2A9C3">
    <property type="expression patterns" value="baseline and differential"/>
</dbReference>
<dbReference type="GO" id="GO:1990130">
    <property type="term" value="C:GATOR1 complex"/>
    <property type="evidence" value="ECO:0007669"/>
    <property type="project" value="Ensembl"/>
</dbReference>
<dbReference type="GO" id="GO:0061700">
    <property type="term" value="C:GATOR2 complex"/>
    <property type="evidence" value="ECO:0007669"/>
    <property type="project" value="Ensembl"/>
</dbReference>
<dbReference type="GO" id="GO:0140007">
    <property type="term" value="C:KICSTOR complex"/>
    <property type="evidence" value="ECO:0000250"/>
    <property type="project" value="UniProtKB"/>
</dbReference>
<dbReference type="GO" id="GO:0005765">
    <property type="term" value="C:lysosomal membrane"/>
    <property type="evidence" value="ECO:0000250"/>
    <property type="project" value="UniProtKB"/>
</dbReference>
<dbReference type="GO" id="GO:0005777">
    <property type="term" value="C:peroxisome"/>
    <property type="evidence" value="ECO:0000314"/>
    <property type="project" value="UniProtKB"/>
</dbReference>
<dbReference type="GO" id="GO:0034198">
    <property type="term" value="P:cellular response to amino acid starvation"/>
    <property type="evidence" value="ECO:0000250"/>
    <property type="project" value="UniProtKB"/>
</dbReference>
<dbReference type="GO" id="GO:0042149">
    <property type="term" value="P:cellular response to glucose starvation"/>
    <property type="evidence" value="ECO:0000250"/>
    <property type="project" value="UniProtKB"/>
</dbReference>
<dbReference type="GO" id="GO:0007417">
    <property type="term" value="P:central nervous system development"/>
    <property type="evidence" value="ECO:0000315"/>
    <property type="project" value="MGI"/>
</dbReference>
<dbReference type="GO" id="GO:0021540">
    <property type="term" value="P:corpus callosum morphogenesis"/>
    <property type="evidence" value="ECO:0007669"/>
    <property type="project" value="Ensembl"/>
</dbReference>
<dbReference type="GO" id="GO:1904262">
    <property type="term" value="P:negative regulation of TORC1 signaling"/>
    <property type="evidence" value="ECO:0000315"/>
    <property type="project" value="UniProtKB"/>
</dbReference>
<dbReference type="GO" id="GO:0043473">
    <property type="term" value="P:pigmentation"/>
    <property type="evidence" value="ECO:0000315"/>
    <property type="project" value="MGI"/>
</dbReference>
<dbReference type="GO" id="GO:0009791">
    <property type="term" value="P:post-embryonic development"/>
    <property type="evidence" value="ECO:0000315"/>
    <property type="project" value="MGI"/>
</dbReference>
<dbReference type="GO" id="GO:0061462">
    <property type="term" value="P:protein localization to lysosome"/>
    <property type="evidence" value="ECO:0000250"/>
    <property type="project" value="UniProtKB"/>
</dbReference>
<dbReference type="GO" id="GO:1901668">
    <property type="term" value="P:regulation of superoxide dismutase activity"/>
    <property type="evidence" value="ECO:0000315"/>
    <property type="project" value="UniProtKB"/>
</dbReference>
<dbReference type="GO" id="GO:0031667">
    <property type="term" value="P:response to nutrient levels"/>
    <property type="evidence" value="ECO:0000315"/>
    <property type="project" value="UniProtKB"/>
</dbReference>
<dbReference type="InterPro" id="IPR033228">
    <property type="entry name" value="SZT2"/>
</dbReference>
<dbReference type="PANTHER" id="PTHR14918">
    <property type="entry name" value="KICSTOR COMPLEX PROTEIN SZT2"/>
    <property type="match status" value="1"/>
</dbReference>
<dbReference type="PANTHER" id="PTHR14918:SF3">
    <property type="entry name" value="KICSTOR COMPLEX PROTEIN SZT2"/>
    <property type="match status" value="1"/>
</dbReference>
<evidence type="ECO:0000250" key="1">
    <source>
        <dbReference type="UniProtKB" id="Q5T011"/>
    </source>
</evidence>
<evidence type="ECO:0000256" key="2">
    <source>
        <dbReference type="SAM" id="MobiDB-lite"/>
    </source>
</evidence>
<evidence type="ECO:0000269" key="3">
    <source>
    </source>
</evidence>
<evidence type="ECO:0000269" key="4">
    <source>
    </source>
</evidence>
<evidence type="ECO:0000269" key="5">
    <source>
    </source>
</evidence>
<evidence type="ECO:0000269" key="6">
    <source>
    </source>
</evidence>
<evidence type="ECO:0000303" key="7">
    <source>
    </source>
</evidence>
<evidence type="ECO:0000303" key="8">
    <source>
    </source>
</evidence>
<evidence type="ECO:0000305" key="9"/>
<evidence type="ECO:0000312" key="10">
    <source>
        <dbReference type="MGI" id="MGI:3033336"/>
    </source>
</evidence>
<keyword id="KW-0025">Alternative splicing</keyword>
<keyword id="KW-0458">Lysosome</keyword>
<keyword id="KW-0472">Membrane</keyword>
<keyword id="KW-0576">Peroxisome</keyword>
<keyword id="KW-0597">Phosphoprotein</keyword>
<keyword id="KW-1185">Reference proteome</keyword>
<name>SZT2_MOUSE</name>
<gene>
    <name evidence="7 10" type="primary">Szt2</name>
</gene>
<reference key="1">
    <citation type="journal article" date="2009" name="Genes Brain Behav.">
        <title>Szt2, a novel gene for seizure threshold in mice.</title>
        <authorList>
            <person name="Frankel W.N."/>
            <person name="Yang Y."/>
            <person name="Mahaffey C.L."/>
            <person name="Beyer B.J."/>
            <person name="O'Brien T.P."/>
        </authorList>
    </citation>
    <scope>NUCLEOTIDE SEQUENCE [MRNA] (ISOFORM 1)</scope>
    <scope>IDENTIFICATION BY MASS SPECTROMETRY</scope>
    <scope>DISRUPTION PHENOTYPE</scope>
    <scope>TISSUE SPECIFICITY</scope>
    <source>
        <strain>C57BL/6J</strain>
        <tissue>Brain</tissue>
    </source>
</reference>
<reference key="2">
    <citation type="journal article" date="2010" name="Free Radic. Biol. Med.">
        <title>A novel giant peroxisomal superoxide dismutase motif-containing protein.</title>
        <authorList>
            <person name="Toutzaris D."/>
            <person name="Lewerenz J."/>
            <person name="Albrecht P."/>
            <person name="Jensen L.T."/>
            <person name="Letz J."/>
            <person name="Geerts A."/>
            <person name="Golz S."/>
            <person name="Methner A."/>
        </authorList>
    </citation>
    <scope>NUCLEOTIDE SEQUENCE [MRNA] (ISOFORM 2)</scope>
    <scope>FUNCTION</scope>
    <scope>INDUCTION</scope>
    <scope>TISSUE SPECIFICITY</scope>
    <scope>SUBCELLULAR LOCATION</scope>
</reference>
<reference key="3">
    <citation type="journal article" date="2009" name="PLoS Biol.">
        <title>Lineage-specific biology revealed by a finished genome assembly of the mouse.</title>
        <authorList>
            <person name="Church D.M."/>
            <person name="Goodstadt L."/>
            <person name="Hillier L.W."/>
            <person name="Zody M.C."/>
            <person name="Goldstein S."/>
            <person name="She X."/>
            <person name="Bult C.J."/>
            <person name="Agarwala R."/>
            <person name="Cherry J.L."/>
            <person name="DiCuccio M."/>
            <person name="Hlavina W."/>
            <person name="Kapustin Y."/>
            <person name="Meric P."/>
            <person name="Maglott D."/>
            <person name="Birtle Z."/>
            <person name="Marques A.C."/>
            <person name="Graves T."/>
            <person name="Zhou S."/>
            <person name="Teague B."/>
            <person name="Potamousis K."/>
            <person name="Churas C."/>
            <person name="Place M."/>
            <person name="Herschleb J."/>
            <person name="Runnheim R."/>
            <person name="Forrest D."/>
            <person name="Amos-Landgraf J."/>
            <person name="Schwartz D.C."/>
            <person name="Cheng Z."/>
            <person name="Lindblad-Toh K."/>
            <person name="Eichler E.E."/>
            <person name="Ponting C.P."/>
        </authorList>
    </citation>
    <scope>NUCLEOTIDE SEQUENCE [LARGE SCALE GENOMIC DNA]</scope>
    <source>
        <strain>C57BL/6J</strain>
    </source>
</reference>
<reference key="4">
    <citation type="journal article" date="2004" name="Genome Res.">
        <title>The status, quality, and expansion of the NIH full-length cDNA project: the Mammalian Gene Collection (MGC).</title>
        <authorList>
            <consortium name="The MGC Project Team"/>
        </authorList>
    </citation>
    <scope>NUCLEOTIDE SEQUENCE [LARGE SCALE MRNA] OF 2675-3431</scope>
    <source>
        <strain>C57BL/6J</strain>
        <strain>Czech II</strain>
        <tissue>Lung</tissue>
    </source>
</reference>
<reference key="5">
    <citation type="journal article" date="2010" name="Cell">
        <title>A tissue-specific atlas of mouse protein phosphorylation and expression.</title>
        <authorList>
            <person name="Huttlin E.L."/>
            <person name="Jedrychowski M.P."/>
            <person name="Elias J.E."/>
            <person name="Goswami T."/>
            <person name="Rad R."/>
            <person name="Beausoleil S.A."/>
            <person name="Villen J."/>
            <person name="Haas W."/>
            <person name="Sowa M.E."/>
            <person name="Gygi S.P."/>
        </authorList>
    </citation>
    <scope>IDENTIFICATION BY MASS SPECTROMETRY [LARGE SCALE ANALYSIS]</scope>
    <source>
        <tissue>Brain</tissue>
        <tissue>Pancreas</tissue>
        <tissue>Spleen</tissue>
    </source>
</reference>
<reference key="6">
    <citation type="journal article" date="2017" name="Nature">
        <title>KICSTOR recruits GATOR1 to the lysosome and is necessary for nutrients to regulate mTORC1.</title>
        <authorList>
            <person name="Wolfson R.L."/>
            <person name="Chantranupong L."/>
            <person name="Wyant G.A."/>
            <person name="Gu X."/>
            <person name="Orozco J.M."/>
            <person name="Shen K."/>
            <person name="Condon K.J."/>
            <person name="Petri S."/>
            <person name="Kedir J."/>
            <person name="Scaria S.M."/>
            <person name="Abu-Remaileh M."/>
            <person name="Frankel W.N."/>
            <person name="Sabatini D.M."/>
        </authorList>
    </citation>
    <scope>FUNCTION</scope>
    <scope>DISRUPTION PHENOTYPE</scope>
</reference>
<reference key="7">
    <citation type="journal article" date="2017" name="Nature">
        <title>SZT2 dictates GATOR control of mTORC1 signalling.</title>
        <authorList>
            <person name="Peng M."/>
            <person name="Yin N."/>
            <person name="Li M.O."/>
        </authorList>
    </citation>
    <scope>FUNCTION</scope>
    <scope>DISRUPTION PHENOTYPE</scope>
</reference>
<sequence>MASERPEPEVEEAGQVFLLMKKDYRISRNVRLAWFLNHLHQTVQATPQELLLQSEQELEVLSVLPPGWQPDEPVVPRPFLLVPSTRVTFLAWQYRFVIELDLSPSTGIVDDSTGEILFDEVFHALSRCLGGLLRPFRVPGSCINFQPEIYVTIQAYSSIIGLQSHQVLVQGCLLDPSQREAFLQQVYEQLCLFEDKVATMLQQQYEPQGQAEDQSPESGESLGRKVGVSMVTADLGLVSMIRQGILALQLLPSNSSAGIIVITDGVTSVPDVAVCETLLNQLRSGTVACSFVQVGGVYSYDCSFGHVPNVELMKFIAMATFGSYLSTCPETEPGNLGLTVYHRAFLLYSFLRSGEALNPEYYCGSQHRLFNEHLVSASSNPALALRRKKHTEKEVPADLVSTVSVRLREGYSVREVTLAKGGSQLEVKLVLLWKHNMRIEYVAVAPWPLEPEGPRGTRVEVTMEGGYDILHDVSCALRQPIRSLYRTHVIRRFWNTLQSINQTDQMLAHLQSFSSVPEHFTLPDSTKSGVPLFYIPPGSSTPVLSLQHSGSDSSHAQFAAYWKPVLSMDANSWQRWLHMHRLVLILEHDTPLPKHLHTPGSNGRYSTIQCRISHSSLTSLLRDWSSFVLVEGYSYVKLLSSAPDQPPSSFYMVRIISKTPCMVLRLGFPIGTPAQARHKIVSGLKEEILRLRFPHRVQSKEPTPKVKRKGLGGVGGSSPSKSPPTLGPQQALSDRPCLVVLHKPLDKLLIRYEKLPLDYRAPFLLTLEPPGPLPLVSGRSASSSLASLSRYLYHRRWLWSVPSGLAPTLPLSATAQLLSVLTEVRLSEGFHFACSGEGIINMVLELPVQNEPLGQAAAEEKHTCVVQYILFPPHSTSTKDSFSTDDDNDVEVEALEGDSELNLVTEVWVEPQYGRVGPGPENWKHLQDLTYSEIPQALHPRDAACIGSLLTFEYLIQLCQSKEWGPLPPEPRLSDGLDQRGDTCVHEIPFHFDLLGLLPQCQQLQMFFLLLSREPEGVPLAEGPCPTNDMVLCLLHSCLGQELSDREIPLTPADQAAFLNEVLRRSLRDPGPEGPPVGGHAVAKDRAGNSTQASGDSTLPSQSVVIPGVLRSSISAQPPQWHCYARLLGPQHVFLTFLPATFSDVQHLTAYGLESSFQEETKPKLGDWSGAPSLKDPGATGTKATESQVPTLSVTLASDSAQDSGEPSTPSCQDLAANSGRQAPQTEGADGPRTRCPVYIYSCSLEALREQMVGLQPPQAPRDLIFRAQDLDHPSSSSAWMEPRCKEAATHCALLQEHAQRCFVRGLFRSLQQAQSVTCQDLLTAVDACEELLQEIDITSFLLALCGHTWGLPHAPPSPGPLSPGPFSSSIEEGPEPRERAILVSESSIETEDLSEPEFQSSRVSGNLDPGPEISLTDVCQLRGEAHDALHSLIQEKFLEISRLHFRTVPSNPHYFFYCPPSSRREDEGPRDTVDRKISDLEFSEAELVGEEGDTSACCVVTESDPELEVEYRESREPDLGPAGLDSASLSDADTVNPDEDSFSILGGDSPTGPDSLMHDLPPLFLHLTCSVRLRGQHSSVPVCSLPTCLGQVLSSLEGPPIGGRVPLRDLSITLDVFVLTLPLEVELPPASDPQHHRSTSESSASFPRSPGQPSSLRSDDGLGPPLPPPEEERHPGLSSLAMPHRLAIESTMNEIRWLLEDEMVGALRRGGIPQSPALHRAAAHIHSSSGRPTCLRQAPPLSFVFGPERSLTQFKEEFRRLHLPGHVLLEDPDSGFFFVAAGQQPGVLHGEPPSAAWAWHNHEDRAEDAEGEVLTASPQVPGSLEDSEGTPLISLPSLSQGGSQPGPSRGLSLMSSQGSVDSDHLGYDGGSSGSDSEGPGETLGEKALFTLRTPPGPAPPQPSLPVLPGPSLPDFWLIVRILQDRVEVYAHARSLSREDGGPGAECRHLQQFLVRRVGEICREVNQRLLLQDLHDSHVCNSLLVAESEEDLWRSETPFHSRQRAVLPSDDFAADESCAPRGYLAATMQFVPGHFSCDVVWGTVIRVHSRLKMGPSMGVSRAIQALRSVLNAFSVVNRKNMFVYQERATKAVYYLRLLETSCSDRPWEGDTLPPSLALSRSQEPISSEDSVAPRSPLDMASSRSSDAVRPVGQVDRHIQLLVHGVGQAGPEITDELVRVLRRRLDEATLDIITVMLVRNCKLTPADVEFIQPPGSLPSEVLHLVLPPSCRPCLPALAWYLRQNLLTFLHSPKYTDSNSRNHFQHPLPAQGGLPDLDIYLYNKPGGQGTGGKGVACITLAFVEEGGTPISLASWPPSSPGPPDPLREEEFEQLTQVIRCPNTLDSCSAQDGSPRLRLDVWEKGNISIVQLEEKLRAAARQALADAIMELRLLPASLCTEDIPPGSLKSGPLDTKSPACRANTFPCTPVSGEPVTPPSKAGRRSFWDMLSKTEAGDLGSPKTTDDIVLDRPEDTRGRRRHKTENVRTPGGSERAPGPDSGAQRQRRRTTQLEEGEVGTLHPVFARVIQRWMGFMVQIGCASVSRSSTHMVSRFLLPSILSEFTTLVISMAGDTSVRVFEQHLGSEPDVFSPCSPGQLGPAPRPAAQRHLLLLGRNFAQWRRPTQQAAKAVQRFESGGDGSPGRSAPRQRLLLLEVTDKKLQLLTYNWAPDLGAALGRALIRLVQWQNARAHLISCLLSQKLGLFHHCGQLDFPMRDGKEPNPFLLPTMEVETLIRNASPPLSREQGRLSGSSRGGGPLSLDTFPFDEALRDITAARPSSTGGPAPRPPDPVTYHGQQFLEIKMTERKELERQMKMENLFVTWQQRSAPASMPISAGELETLKQSSRLVHYCATALLFDPAAWLHGPPETCAPSEGQRRPCPESGSGSREVPTSCESLDVPPPGAREEPWLKELSLAFLQQYVQYLQSIGFVLVPLRPPSPARSTSRLRAMAILGTEGRGSFSCPKAKAEGSPKSTSTPVTTYHLQRALPGGIILMELTFQGCYFCVKQFALECSRIPMGQAVNSQLSLLFTEECDKVRDLMHVHSFSYDFHLRLVHQHVLGAHLALRHGYHLTTFLQHFLAHHPDGPHFGRNHIYQGTLELPTPLIAAHQLYNYVADHASSYHMKPLRMARPGGPEHNEYALVSAWHSSGSYLDSEGLRHQDDFDVSLLVCHSAAPFEEQGEAERHVLRLQFFVVLTSQRELFPRLTADMRRFRKPSRLPLEPETPGSLVGSPREASGMMLAPGPAPLFPPLAAEVGMARARLAQLVRLAGGHCRRDTLWKRLFLLEPPGPDRLRLGGRLALAELEELLEAVHAKSIADIDPQLDCFLSMTVSWYQSLIKVLLSRFPQSCRHFQSPDLGTQYLVVLNQKFTDCFVLVFLDSHLGKTSLTVVFREPFPVQPQDSESPPAQLVSTYHHLESVINTACFTLWTRLL</sequence>
<accession>A2A9C3</accession>
<accession>Q6PB77</accession>
<accession>Q7TSS6</accession>
<feature type="chain" id="PRO_0000399821" description="KICSTOR complex protein SZT2">
    <location>
        <begin position="1"/>
        <end position="3431"/>
    </location>
</feature>
<feature type="region of interest" description="Disordered" evidence="2">
    <location>
        <begin position="699"/>
        <end position="731"/>
    </location>
</feature>
<feature type="region of interest" description="Disordered" evidence="2">
    <location>
        <begin position="1067"/>
        <end position="1101"/>
    </location>
</feature>
<feature type="region of interest" description="Mediates interaction with the GATOR1 complex" evidence="1">
    <location>
        <begin position="1082"/>
        <end position="1188"/>
    </location>
</feature>
<feature type="region of interest" description="Disordered" evidence="2">
    <location>
        <begin position="1162"/>
        <end position="1231"/>
    </location>
</feature>
<feature type="region of interest" description="Disordered" evidence="2">
    <location>
        <begin position="1356"/>
        <end position="1378"/>
    </location>
</feature>
<feature type="region of interest" description="Disordered" evidence="2">
    <location>
        <begin position="1512"/>
        <end position="1534"/>
    </location>
</feature>
<feature type="region of interest" description="Disordered" evidence="2">
    <location>
        <begin position="1629"/>
        <end position="1678"/>
    </location>
</feature>
<feature type="region of interest" description="Disordered" evidence="2">
    <location>
        <begin position="1806"/>
        <end position="1883"/>
    </location>
</feature>
<feature type="region of interest" description="Disordered" evidence="2">
    <location>
        <begin position="2113"/>
        <end position="2148"/>
    </location>
</feature>
<feature type="region of interest" description="Disordered" evidence="2">
    <location>
        <begin position="2450"/>
        <end position="2512"/>
    </location>
</feature>
<feature type="region of interest" description="Disordered" evidence="2">
    <location>
        <begin position="2735"/>
        <end position="2756"/>
    </location>
</feature>
<feature type="region of interest" description="Disordered" evidence="2">
    <location>
        <begin position="2866"/>
        <end position="2899"/>
    </location>
</feature>
<feature type="compositionally biased region" description="Polar residues" evidence="2">
    <location>
        <begin position="1088"/>
        <end position="1101"/>
    </location>
</feature>
<feature type="compositionally biased region" description="Polar residues" evidence="2">
    <location>
        <begin position="1182"/>
        <end position="1212"/>
    </location>
</feature>
<feature type="compositionally biased region" description="Polar residues" evidence="2">
    <location>
        <begin position="1641"/>
        <end position="1657"/>
    </location>
</feature>
<feature type="compositionally biased region" description="Low complexity" evidence="2">
    <location>
        <begin position="1832"/>
        <end position="1854"/>
    </location>
</feature>
<feature type="compositionally biased region" description="Polar residues" evidence="2">
    <location>
        <begin position="2118"/>
        <end position="2129"/>
    </location>
</feature>
<feature type="compositionally biased region" description="Basic and acidic residues" evidence="2">
    <location>
        <begin position="2460"/>
        <end position="2473"/>
    </location>
</feature>
<feature type="compositionally biased region" description="Low complexity" evidence="2">
    <location>
        <begin position="2739"/>
        <end position="2749"/>
    </location>
</feature>
<feature type="modified residue" description="Phosphoserine" evidence="1">
    <location>
        <position position="1275"/>
    </location>
</feature>
<feature type="modified residue" description="Phosphoserine" evidence="1">
    <location>
        <position position="1415"/>
    </location>
</feature>
<feature type="modified residue" description="Phosphothreonine" evidence="1">
    <location>
        <position position="1640"/>
    </location>
</feature>
<feature type="modified residue" description="Phosphoserine" evidence="1">
    <location>
        <position position="1650"/>
    </location>
</feature>
<feature type="splice variant" id="VSP_039917" description="In isoform 2." evidence="8">
    <location>
        <position position="2131"/>
    </location>
</feature>
<feature type="sequence conflict" description="In Ref. 1; GU433214." evidence="9" ref="1">
    <original>C</original>
    <variation>S</variation>
    <location>
        <position position="275"/>
    </location>
</feature>
<feature type="sequence conflict" description="In Ref. 1; GU433214." evidence="9" ref="1">
    <original>N</original>
    <variation>K</variation>
    <location>
        <position position="888"/>
    </location>
</feature>
<feature type="sequence conflict" description="In Ref. 1; GU433214." evidence="9" ref="1">
    <original>L</original>
    <variation>C</variation>
    <location>
        <position position="1067"/>
    </location>
</feature>
<feature type="sequence conflict" description="In Ref. 1; GU433214." evidence="9" ref="1">
    <original>L</original>
    <variation>H</variation>
    <location>
        <position position="1192"/>
    </location>
</feature>
<feature type="sequence conflict" description="In Ref. 1; GU433214." evidence="9" ref="1">
    <original>S</original>
    <variation>T</variation>
    <location>
        <position position="1204"/>
    </location>
</feature>
<feature type="sequence conflict" description="In Ref. 1; GU433214." evidence="9" ref="1">
    <original>F</original>
    <variation>S</variation>
    <location>
        <position position="1308"/>
    </location>
</feature>
<proteinExistence type="evidence at protein level"/>
<organism>
    <name type="scientific">Mus musculus</name>
    <name type="common">Mouse</name>
    <dbReference type="NCBI Taxonomy" id="10090"/>
    <lineage>
        <taxon>Eukaryota</taxon>
        <taxon>Metazoa</taxon>
        <taxon>Chordata</taxon>
        <taxon>Craniata</taxon>
        <taxon>Vertebrata</taxon>
        <taxon>Euteleostomi</taxon>
        <taxon>Mammalia</taxon>
        <taxon>Eutheria</taxon>
        <taxon>Euarchontoglires</taxon>
        <taxon>Glires</taxon>
        <taxon>Rodentia</taxon>
        <taxon>Myomorpha</taxon>
        <taxon>Muroidea</taxon>
        <taxon>Muridae</taxon>
        <taxon>Murinae</taxon>
        <taxon>Mus</taxon>
        <taxon>Mus</taxon>
    </lineage>
</organism>